<proteinExistence type="evidence at transcript level"/>
<evidence type="ECO:0000250" key="1"/>
<evidence type="ECO:0000255" key="2"/>
<evidence type="ECO:0000305" key="3"/>
<protein>
    <recommendedName>
        <fullName>GDSL esterase/lipase At3g50400</fullName>
        <ecNumber>3.1.1.-</ecNumber>
    </recommendedName>
    <alternativeName>
        <fullName>Extracellular lipase At3g50400</fullName>
    </alternativeName>
</protein>
<keyword id="KW-0325">Glycoprotein</keyword>
<keyword id="KW-0378">Hydrolase</keyword>
<keyword id="KW-0442">Lipid degradation</keyword>
<keyword id="KW-0443">Lipid metabolism</keyword>
<keyword id="KW-1185">Reference proteome</keyword>
<keyword id="KW-0964">Secreted</keyword>
<keyword id="KW-0732">Signal</keyword>
<feature type="signal peptide" evidence="2">
    <location>
        <begin position="1"/>
        <end position="26"/>
    </location>
</feature>
<feature type="chain" id="PRO_0000367399" description="GDSL esterase/lipase At3g50400">
    <location>
        <begin position="27"/>
        <end position="374"/>
    </location>
</feature>
<feature type="active site" description="Nucleophile" evidence="1">
    <location>
        <position position="41"/>
    </location>
</feature>
<feature type="active site" evidence="1">
    <location>
        <position position="339"/>
    </location>
</feature>
<feature type="active site" evidence="1">
    <location>
        <position position="342"/>
    </location>
</feature>
<feature type="glycosylation site" description="N-linked (GlcNAc...) asparagine" evidence="2">
    <location>
        <position position="104"/>
    </location>
</feature>
<feature type="glycosylation site" description="N-linked (GlcNAc...) asparagine" evidence="2">
    <location>
        <position position="125"/>
    </location>
</feature>
<name>GDL58_ARATH</name>
<reference key="1">
    <citation type="journal article" date="2000" name="Nature">
        <title>Sequence and analysis of chromosome 3 of the plant Arabidopsis thaliana.</title>
        <authorList>
            <person name="Salanoubat M."/>
            <person name="Lemcke K."/>
            <person name="Rieger M."/>
            <person name="Ansorge W."/>
            <person name="Unseld M."/>
            <person name="Fartmann B."/>
            <person name="Valle G."/>
            <person name="Bloecker H."/>
            <person name="Perez-Alonso M."/>
            <person name="Obermaier B."/>
            <person name="Delseny M."/>
            <person name="Boutry M."/>
            <person name="Grivell L.A."/>
            <person name="Mache R."/>
            <person name="Puigdomenech P."/>
            <person name="De Simone V."/>
            <person name="Choisne N."/>
            <person name="Artiguenave F."/>
            <person name="Robert C."/>
            <person name="Brottier P."/>
            <person name="Wincker P."/>
            <person name="Cattolico L."/>
            <person name="Weissenbach J."/>
            <person name="Saurin W."/>
            <person name="Quetier F."/>
            <person name="Schaefer M."/>
            <person name="Mueller-Auer S."/>
            <person name="Gabel C."/>
            <person name="Fuchs M."/>
            <person name="Benes V."/>
            <person name="Wurmbach E."/>
            <person name="Drzonek H."/>
            <person name="Erfle H."/>
            <person name="Jordan N."/>
            <person name="Bangert S."/>
            <person name="Wiedelmann R."/>
            <person name="Kranz H."/>
            <person name="Voss H."/>
            <person name="Holland R."/>
            <person name="Brandt P."/>
            <person name="Nyakatura G."/>
            <person name="Vezzi A."/>
            <person name="D'Angelo M."/>
            <person name="Pallavicini A."/>
            <person name="Toppo S."/>
            <person name="Simionati B."/>
            <person name="Conrad A."/>
            <person name="Hornischer K."/>
            <person name="Kauer G."/>
            <person name="Loehnert T.-H."/>
            <person name="Nordsiek G."/>
            <person name="Reichelt J."/>
            <person name="Scharfe M."/>
            <person name="Schoen O."/>
            <person name="Bargues M."/>
            <person name="Terol J."/>
            <person name="Climent J."/>
            <person name="Navarro P."/>
            <person name="Collado C."/>
            <person name="Perez-Perez A."/>
            <person name="Ottenwaelder B."/>
            <person name="Duchemin D."/>
            <person name="Cooke R."/>
            <person name="Laudie M."/>
            <person name="Berger-Llauro C."/>
            <person name="Purnelle B."/>
            <person name="Masuy D."/>
            <person name="de Haan M."/>
            <person name="Maarse A.C."/>
            <person name="Alcaraz J.-P."/>
            <person name="Cottet A."/>
            <person name="Casacuberta E."/>
            <person name="Monfort A."/>
            <person name="Argiriou A."/>
            <person name="Flores M."/>
            <person name="Liguori R."/>
            <person name="Vitale D."/>
            <person name="Mannhaupt G."/>
            <person name="Haase D."/>
            <person name="Schoof H."/>
            <person name="Rudd S."/>
            <person name="Zaccaria P."/>
            <person name="Mewes H.-W."/>
            <person name="Mayer K.F.X."/>
            <person name="Kaul S."/>
            <person name="Town C.D."/>
            <person name="Koo H.L."/>
            <person name="Tallon L.J."/>
            <person name="Jenkins J."/>
            <person name="Rooney T."/>
            <person name="Rizzo M."/>
            <person name="Walts A."/>
            <person name="Utterback T."/>
            <person name="Fujii C.Y."/>
            <person name="Shea T.P."/>
            <person name="Creasy T.H."/>
            <person name="Haas B."/>
            <person name="Maiti R."/>
            <person name="Wu D."/>
            <person name="Peterson J."/>
            <person name="Van Aken S."/>
            <person name="Pai G."/>
            <person name="Militscher J."/>
            <person name="Sellers P."/>
            <person name="Gill J.E."/>
            <person name="Feldblyum T.V."/>
            <person name="Preuss D."/>
            <person name="Lin X."/>
            <person name="Nierman W.C."/>
            <person name="Salzberg S.L."/>
            <person name="White O."/>
            <person name="Venter J.C."/>
            <person name="Fraser C.M."/>
            <person name="Kaneko T."/>
            <person name="Nakamura Y."/>
            <person name="Sato S."/>
            <person name="Kato T."/>
            <person name="Asamizu E."/>
            <person name="Sasamoto S."/>
            <person name="Kimura T."/>
            <person name="Idesawa K."/>
            <person name="Kawashima K."/>
            <person name="Kishida Y."/>
            <person name="Kiyokawa C."/>
            <person name="Kohara M."/>
            <person name="Matsumoto M."/>
            <person name="Matsuno A."/>
            <person name="Muraki A."/>
            <person name="Nakayama S."/>
            <person name="Nakazaki N."/>
            <person name="Shinpo S."/>
            <person name="Takeuchi C."/>
            <person name="Wada T."/>
            <person name="Watanabe A."/>
            <person name="Yamada M."/>
            <person name="Yasuda M."/>
            <person name="Tabata S."/>
        </authorList>
    </citation>
    <scope>NUCLEOTIDE SEQUENCE [LARGE SCALE GENOMIC DNA] OF 64-131; 132-214 AND 215-374</scope>
    <source>
        <strain>cv. Columbia</strain>
    </source>
</reference>
<reference key="2">
    <citation type="journal article" date="2017" name="Plant J.">
        <title>Araport11: a complete reannotation of the Arabidopsis thaliana reference genome.</title>
        <authorList>
            <person name="Cheng C.Y."/>
            <person name="Krishnakumar V."/>
            <person name="Chan A.P."/>
            <person name="Thibaud-Nissen F."/>
            <person name="Schobel S."/>
            <person name="Town C.D."/>
        </authorList>
    </citation>
    <scope>GENOME REANNOTATION</scope>
    <source>
        <strain>cv. Columbia</strain>
    </source>
</reference>
<reference key="3">
    <citation type="journal article" date="2002" name="Science">
        <title>Functional annotation of a full-length Arabidopsis cDNA collection.</title>
        <authorList>
            <person name="Seki M."/>
            <person name="Narusaka M."/>
            <person name="Kamiya A."/>
            <person name="Ishida J."/>
            <person name="Satou M."/>
            <person name="Sakurai T."/>
            <person name="Nakajima M."/>
            <person name="Enju A."/>
            <person name="Akiyama K."/>
            <person name="Oono Y."/>
            <person name="Muramatsu M."/>
            <person name="Hayashizaki Y."/>
            <person name="Kawai J."/>
            <person name="Carninci P."/>
            <person name="Itoh M."/>
            <person name="Ishii Y."/>
            <person name="Arakawa T."/>
            <person name="Shibata K."/>
            <person name="Shinagawa A."/>
            <person name="Shinozaki K."/>
        </authorList>
    </citation>
    <scope>NUCLEOTIDE SEQUENCE [LARGE SCALE MRNA]</scope>
    <source>
        <strain>cv. Columbia</strain>
    </source>
</reference>
<reference key="4">
    <citation type="journal article" date="2004" name="Prog. Lipid Res.">
        <title>GDSL family of serine esterases/lipases.</title>
        <authorList>
            <person name="Akoh C.C."/>
            <person name="Lee G.-C."/>
            <person name="Liaw Y.-C."/>
            <person name="Huang T.-H."/>
            <person name="Shaw J.-F."/>
        </authorList>
    </citation>
    <scope>REVIEW</scope>
</reference>
<reference key="5">
    <citation type="journal article" date="2008" name="Pak. J. Biol. Sci.">
        <title>Sequence analysis of GDSL lipase gene family in Arabidopsis thaliana.</title>
        <authorList>
            <person name="Ling H."/>
        </authorList>
    </citation>
    <scope>GENE FAMILY</scope>
</reference>
<gene>
    <name type="ordered locus">At3g50400</name>
    <name type="ORF">F11C1.240</name>
</gene>
<sequence>MKKSIFFVPVLVLFFFGSRFSRVASAGDQRALAASFVFGDSLVDAGNNNYLQTLSRANSPPNGIDFKPSRGNPTGRFTNGRTIADIVGEKLGQQSYAVPYLAPNASGEALLNGVNYASGGGGILNATGSVFVNRLGMDIQVDYFTNTRKQFDKLLGQDKARDYIRKRSLFSVVIGSNDFLNNYLVPFVAAQARLTQTPETFVDDMISHLRNQLKRLYDMDARKFVVGNVAPIGCIPYQKSINQLNDKQCVDLANKLAIQYNARLKDLLTVELKDSLKDAHFVYANVYDLFMDLIVNFKDYGFRTASEACCETRGRLAGILPCGPTSSLCTDRSKHVFWDAYHPTEAANLLIADKLLYGDSKFVTPFNLLHLRDL</sequence>
<organism>
    <name type="scientific">Arabidopsis thaliana</name>
    <name type="common">Mouse-ear cress</name>
    <dbReference type="NCBI Taxonomy" id="3702"/>
    <lineage>
        <taxon>Eukaryota</taxon>
        <taxon>Viridiplantae</taxon>
        <taxon>Streptophyta</taxon>
        <taxon>Embryophyta</taxon>
        <taxon>Tracheophyta</taxon>
        <taxon>Spermatophyta</taxon>
        <taxon>Magnoliopsida</taxon>
        <taxon>eudicotyledons</taxon>
        <taxon>Gunneridae</taxon>
        <taxon>Pentapetalae</taxon>
        <taxon>rosids</taxon>
        <taxon>malvids</taxon>
        <taxon>Brassicales</taxon>
        <taxon>Brassicaceae</taxon>
        <taxon>Camelineae</taxon>
        <taxon>Arabidopsis</taxon>
    </lineage>
</organism>
<accession>Q9M2R9</accession>
<dbReference type="EC" id="3.1.1.-"/>
<dbReference type="EMBL" id="AL132976">
    <property type="protein sequence ID" value="CAB88323.1"/>
    <property type="molecule type" value="Genomic_DNA"/>
</dbReference>
<dbReference type="EMBL" id="CP002686">
    <property type="protein sequence ID" value="AEE78663.1"/>
    <property type="molecule type" value="Genomic_DNA"/>
</dbReference>
<dbReference type="EMBL" id="AK117654">
    <property type="protein sequence ID" value="BAC42308.1"/>
    <property type="molecule type" value="mRNA"/>
</dbReference>
<dbReference type="RefSeq" id="NP_190609.1">
    <property type="nucleotide sequence ID" value="NM_114900.3"/>
</dbReference>
<dbReference type="SMR" id="Q9M2R9"/>
<dbReference type="FunCoup" id="Q9M2R9">
    <property type="interactions" value="96"/>
</dbReference>
<dbReference type="STRING" id="3702.Q9M2R9"/>
<dbReference type="GlyGen" id="Q9M2R9">
    <property type="glycosylation" value="3 sites"/>
</dbReference>
<dbReference type="PaxDb" id="3702-AT3G50400.1"/>
<dbReference type="ProteomicsDB" id="221981"/>
<dbReference type="EnsemblPlants" id="AT3G50400.1">
    <property type="protein sequence ID" value="AT3G50400.1"/>
    <property type="gene ID" value="AT3G50400"/>
</dbReference>
<dbReference type="GeneID" id="824204"/>
<dbReference type="Gramene" id="AT3G50400.1">
    <property type="protein sequence ID" value="AT3G50400.1"/>
    <property type="gene ID" value="AT3G50400"/>
</dbReference>
<dbReference type="KEGG" id="ath:AT3G50400"/>
<dbReference type="Araport" id="AT3G50400"/>
<dbReference type="TAIR" id="AT3G50400"/>
<dbReference type="eggNOG" id="ENOG502S4IX">
    <property type="taxonomic scope" value="Eukaryota"/>
</dbReference>
<dbReference type="HOGENOM" id="CLU_015101_0_0_1"/>
<dbReference type="InParanoid" id="Q9M2R9"/>
<dbReference type="OMA" id="EACCETR"/>
<dbReference type="OrthoDB" id="1600564at2759"/>
<dbReference type="PhylomeDB" id="Q9M2R9"/>
<dbReference type="BioCyc" id="ARA:AT3G50400-MONOMER"/>
<dbReference type="PRO" id="PR:Q9M2R9"/>
<dbReference type="Proteomes" id="UP000006548">
    <property type="component" value="Chromosome 3"/>
</dbReference>
<dbReference type="ExpressionAtlas" id="Q9M2R9">
    <property type="expression patterns" value="baseline and differential"/>
</dbReference>
<dbReference type="GO" id="GO:0005576">
    <property type="term" value="C:extracellular region"/>
    <property type="evidence" value="ECO:0007669"/>
    <property type="project" value="UniProtKB-SubCell"/>
</dbReference>
<dbReference type="GO" id="GO:0016788">
    <property type="term" value="F:hydrolase activity, acting on ester bonds"/>
    <property type="evidence" value="ECO:0007669"/>
    <property type="project" value="InterPro"/>
</dbReference>
<dbReference type="GO" id="GO:0016042">
    <property type="term" value="P:lipid catabolic process"/>
    <property type="evidence" value="ECO:0007669"/>
    <property type="project" value="UniProtKB-KW"/>
</dbReference>
<dbReference type="CDD" id="cd01837">
    <property type="entry name" value="SGNH_plant_lipase_like"/>
    <property type="match status" value="1"/>
</dbReference>
<dbReference type="Gene3D" id="3.40.50.1110">
    <property type="entry name" value="SGNH hydrolase"/>
    <property type="match status" value="1"/>
</dbReference>
<dbReference type="InterPro" id="IPR001087">
    <property type="entry name" value="GDSL"/>
</dbReference>
<dbReference type="InterPro" id="IPR051058">
    <property type="entry name" value="GDSL_Est/Lipase"/>
</dbReference>
<dbReference type="InterPro" id="IPR036514">
    <property type="entry name" value="SGNH_hydro_sf"/>
</dbReference>
<dbReference type="InterPro" id="IPR035669">
    <property type="entry name" value="SGNH_plant_lipase-like"/>
</dbReference>
<dbReference type="PANTHER" id="PTHR45648:SF139">
    <property type="entry name" value="GDSL ESTERASE_LIPASE"/>
    <property type="match status" value="1"/>
</dbReference>
<dbReference type="PANTHER" id="PTHR45648">
    <property type="entry name" value="GDSL LIPASE/ACYLHYDROLASE FAMILY PROTEIN (AFU_ORTHOLOGUE AFUA_4G14700)"/>
    <property type="match status" value="1"/>
</dbReference>
<dbReference type="Pfam" id="PF00657">
    <property type="entry name" value="Lipase_GDSL"/>
    <property type="match status" value="1"/>
</dbReference>
<dbReference type="SUPFAM" id="SSF52266">
    <property type="entry name" value="SGNH hydrolase"/>
    <property type="match status" value="1"/>
</dbReference>
<comment type="subcellular location">
    <subcellularLocation>
        <location evidence="3">Secreted</location>
    </subcellularLocation>
</comment>
<comment type="similarity">
    <text evidence="3">Belongs to the 'GDSL' lipolytic enzyme family.</text>
</comment>